<comment type="similarity">
    <text evidence="1">Belongs to the UPF0301 (AlgH) family.</text>
</comment>
<organism>
    <name type="scientific">Francisella tularensis subsp. holarctica (strain FTNF002-00 / FTA)</name>
    <dbReference type="NCBI Taxonomy" id="458234"/>
    <lineage>
        <taxon>Bacteria</taxon>
        <taxon>Pseudomonadati</taxon>
        <taxon>Pseudomonadota</taxon>
        <taxon>Gammaproteobacteria</taxon>
        <taxon>Thiotrichales</taxon>
        <taxon>Francisellaceae</taxon>
        <taxon>Francisella</taxon>
    </lineage>
</organism>
<sequence length="194" mass="22186">MYQNHKSEILLATPLIKDDIVFTKSVVYLCQNDRHGAMGLIINKPLADTLKDVFEELHISHTNTFKEILEYPLYMGGPISPHKIMILHTTNGRNYTSTIKLDEGLAITASIDILEDIANNILPEYFLPVVGYSCWTANQLTDEIKSNDWIVTNKLNKKILFNHENKVKWQNHLEHAGYTLQSLDTLFNRNTGNC</sequence>
<dbReference type="EMBL" id="CP000803">
    <property type="protein sequence ID" value="ABU61761.1"/>
    <property type="molecule type" value="Genomic_DNA"/>
</dbReference>
<dbReference type="RefSeq" id="WP_010030473.1">
    <property type="nucleotide sequence ID" value="NC_009749.1"/>
</dbReference>
<dbReference type="SMR" id="A7NCQ8"/>
<dbReference type="KEGG" id="fta:FTA_1286"/>
<dbReference type="HOGENOM" id="CLU_057596_1_0_6"/>
<dbReference type="GO" id="GO:0005829">
    <property type="term" value="C:cytosol"/>
    <property type="evidence" value="ECO:0007669"/>
    <property type="project" value="TreeGrafter"/>
</dbReference>
<dbReference type="Gene3D" id="3.40.1740.10">
    <property type="entry name" value="VC0467-like"/>
    <property type="match status" value="1"/>
</dbReference>
<dbReference type="Gene3D" id="3.30.70.1300">
    <property type="entry name" value="VC0467-like domains"/>
    <property type="match status" value="1"/>
</dbReference>
<dbReference type="HAMAP" id="MF_00758">
    <property type="entry name" value="UPF0301"/>
    <property type="match status" value="1"/>
</dbReference>
<dbReference type="InterPro" id="IPR003774">
    <property type="entry name" value="AlgH-like"/>
</dbReference>
<dbReference type="PANTHER" id="PTHR30327">
    <property type="entry name" value="UNCHARACTERIZED PROTEIN YQGE"/>
    <property type="match status" value="1"/>
</dbReference>
<dbReference type="PANTHER" id="PTHR30327:SF1">
    <property type="entry name" value="UPF0301 PROTEIN YQGE"/>
    <property type="match status" value="1"/>
</dbReference>
<dbReference type="Pfam" id="PF02622">
    <property type="entry name" value="DUF179"/>
    <property type="match status" value="1"/>
</dbReference>
<dbReference type="SUPFAM" id="SSF143456">
    <property type="entry name" value="VC0467-like"/>
    <property type="match status" value="1"/>
</dbReference>
<name>Y1286_FRATF</name>
<evidence type="ECO:0000255" key="1">
    <source>
        <dbReference type="HAMAP-Rule" id="MF_00758"/>
    </source>
</evidence>
<protein>
    <recommendedName>
        <fullName evidence="1">UPF0301 protein FTA_1286</fullName>
    </recommendedName>
</protein>
<accession>A7NCQ8</accession>
<feature type="chain" id="PRO_1000046655" description="UPF0301 protein FTA_1286">
    <location>
        <begin position="1"/>
        <end position="194"/>
    </location>
</feature>
<gene>
    <name type="ordered locus">FTA_1286</name>
</gene>
<reference key="1">
    <citation type="journal article" date="2009" name="PLoS ONE">
        <title>Complete genome sequence of Francisella tularensis subspecies holarctica FTNF002-00.</title>
        <authorList>
            <person name="Barabote R.D."/>
            <person name="Xie G."/>
            <person name="Brettin T.S."/>
            <person name="Hinrichs S.H."/>
            <person name="Fey P.D."/>
            <person name="Jay J.J."/>
            <person name="Engle J.L."/>
            <person name="Godbole S.D."/>
            <person name="Noronha J.M."/>
            <person name="Scheuermann R.H."/>
            <person name="Zhou L.W."/>
            <person name="Lion C."/>
            <person name="Dempsey M.P."/>
        </authorList>
    </citation>
    <scope>NUCLEOTIDE SEQUENCE [LARGE SCALE GENOMIC DNA]</scope>
    <source>
        <strain>FTNF002-00 / FTA</strain>
    </source>
</reference>
<proteinExistence type="inferred from homology"/>